<keyword id="KW-0903">Direct protein sequencing</keyword>
<keyword id="KW-0325">Glycoprotein</keyword>
<keyword id="KW-0378">Hydrolase</keyword>
<keyword id="KW-0732">Signal</keyword>
<sequence length="479" mass="52612">MPRTSLLTLACALATGASAFSYGAAIPQSTQEKQFSQEFRDGYSILKHYGGNGPYSERVSYGIARDPPTGCEVDQVIMVKRHGERYPSPSAGKSIEEALAKVYSINTTEYKGDLAFLNDWTYYVPNECYYNAETTSGPYAGLLDAYNHGNDYKARYGHLWNGETVVPFFSSGYGRVIETARKFGEGFFGYNYSTNAALNIISESEVMGADSLTPTCDTDNDQTTCDNLTYQLPQFKVAAARLNSQNPGMNLTASDVYNLIVMASFELNARPFSNWINAFTQDEWVSFGYVEDLNYYYCAGPGDKNMAAVGAVYANASLTLLNQGPKEAGPLFFNFAHDTNITPILAALGVLIPNEDLPLDRVAFGNPYSIGNIVPMGGHLTIERLSCQATALSDKGTYVRLVLNEAVLPFNDCTSGPGYSCPLANYTSILNKNLPDYTTTCNVSASYPQYLSFWWNYNTTTELNYRSSPIACQEGDAMD</sequence>
<name>PHYB_ASPNG</name>
<evidence type="ECO:0000250" key="1"/>
<evidence type="ECO:0000255" key="2"/>
<evidence type="ECO:0000269" key="3">
    <source>
    </source>
</evidence>
<evidence type="ECO:0000305" key="4"/>
<feature type="signal peptide" evidence="3">
    <location>
        <begin position="1"/>
        <end position="19"/>
    </location>
</feature>
<feature type="chain" id="PRO_0000023974" description="3-phytase B">
    <location>
        <begin position="20"/>
        <end position="479"/>
    </location>
</feature>
<feature type="active site" description="Nucleophile" evidence="1">
    <location>
        <position position="82"/>
    </location>
</feature>
<feature type="active site" description="Proton donor" evidence="1">
    <location>
        <position position="338"/>
    </location>
</feature>
<feature type="glycosylation site" description="N-linked (GlcNAc...) asparagine" evidence="2">
    <location>
        <position position="106"/>
    </location>
</feature>
<feature type="glycosylation site" description="N-linked (GlcNAc...) asparagine" evidence="2">
    <location>
        <position position="191"/>
    </location>
</feature>
<feature type="glycosylation site" description="N-linked (GlcNAc...) asparagine" evidence="2">
    <location>
        <position position="227"/>
    </location>
</feature>
<feature type="glycosylation site" description="N-linked (GlcNAc...) asparagine" evidence="2">
    <location>
        <position position="250"/>
    </location>
</feature>
<feature type="glycosylation site" description="N-linked (GlcNAc...) asparagine" evidence="2">
    <location>
        <position position="315"/>
    </location>
</feature>
<feature type="glycosylation site" description="N-linked (GlcNAc...) asparagine" evidence="2">
    <location>
        <position position="425"/>
    </location>
</feature>
<feature type="glycosylation site" description="N-linked (GlcNAc...) asparagine" evidence="2">
    <location>
        <position position="442"/>
    </location>
</feature>
<feature type="glycosylation site" description="N-linked (GlcNAc...) asparagine" evidence="2">
    <location>
        <position position="458"/>
    </location>
</feature>
<proteinExistence type="evidence at protein level"/>
<accession>P34754</accession>
<comment type="function">
    <text>Catalyzes the hydrolysis of inorganic orthophosphate from phytate.</text>
</comment>
<comment type="catalytic activity">
    <reaction>
        <text>1D-myo-inositol hexakisphosphate + H2O = 1D-myo-inositol 1,2,4,5,6-pentakisphosphate + phosphate</text>
        <dbReference type="Rhea" id="RHEA:16989"/>
        <dbReference type="ChEBI" id="CHEBI:15377"/>
        <dbReference type="ChEBI" id="CHEBI:43474"/>
        <dbReference type="ChEBI" id="CHEBI:57798"/>
        <dbReference type="ChEBI" id="CHEBI:58130"/>
        <dbReference type="EC" id="3.1.3.8"/>
    </reaction>
</comment>
<comment type="similarity">
    <text evidence="4">Belongs to the histidine acid phosphatase family.</text>
</comment>
<organism>
    <name type="scientific">Aspergillus niger</name>
    <dbReference type="NCBI Taxonomy" id="5061"/>
    <lineage>
        <taxon>Eukaryota</taxon>
        <taxon>Fungi</taxon>
        <taxon>Dikarya</taxon>
        <taxon>Ascomycota</taxon>
        <taxon>Pezizomycotina</taxon>
        <taxon>Eurotiomycetes</taxon>
        <taxon>Eurotiomycetidae</taxon>
        <taxon>Eurotiales</taxon>
        <taxon>Aspergillaceae</taxon>
        <taxon>Aspergillus</taxon>
        <taxon>Aspergillus subgen. Circumdati</taxon>
    </lineage>
</organism>
<reference key="1">
    <citation type="journal article" date="1993" name="Biochem. Biophys. Res. Commun.">
        <title>Identification and cloning of a second phytase gene (phyB) from Aspergillus niger (ficuum).</title>
        <authorList>
            <person name="Ehrlich K.C."/>
            <person name="Montalbano B.G."/>
            <person name="Mullaney E.J."/>
            <person name="Dischinger H.C. Jr."/>
            <person name="Ullah A.H.J."/>
        </authorList>
    </citation>
    <scope>NUCLEOTIDE SEQUENCE [GENOMIC DNA]</scope>
    <scope>PROTEIN SEQUENCE OF 20-101; 133-141 AND 376-399</scope>
</reference>
<protein>
    <recommendedName>
        <fullName>3-phytase B</fullName>
        <ecNumber>3.1.3.8</ecNumber>
    </recommendedName>
    <alternativeName>
        <fullName>3 phytase B</fullName>
    </alternativeName>
    <alternativeName>
        <fullName>Myo-inositol hexakisphosphate phosphohydrolase B</fullName>
    </alternativeName>
    <alternativeName>
        <fullName>Myo-inositol-hexaphosphate 3-phosphohydrolase B</fullName>
    </alternativeName>
</protein>
<dbReference type="EC" id="3.1.3.8"/>
<dbReference type="EMBL" id="L20567">
    <property type="protein sequence ID" value="AAA02934.1"/>
    <property type="molecule type" value="Unassigned_DNA"/>
</dbReference>
<dbReference type="SMR" id="P34754"/>
<dbReference type="Allergome" id="3131">
    <property type="allergen name" value="Asp n 25.0101"/>
</dbReference>
<dbReference type="Allergome" id="844">
    <property type="allergen name" value="Asp n 25"/>
</dbReference>
<dbReference type="GlyCosmos" id="P34754">
    <property type="glycosylation" value="8 sites, No reported glycans"/>
</dbReference>
<dbReference type="PaxDb" id="5061-CADANGAP00007284"/>
<dbReference type="VEuPathDB" id="FungiDB:An08g11030"/>
<dbReference type="VEuPathDB" id="FungiDB:ASPNIDRAFT2_1189246"/>
<dbReference type="VEuPathDB" id="FungiDB:ATCC64974_96640"/>
<dbReference type="VEuPathDB" id="FungiDB:M747DRAFT_325681"/>
<dbReference type="eggNOG" id="KOG1382">
    <property type="taxonomic scope" value="Eukaryota"/>
</dbReference>
<dbReference type="BRENDA" id="3.1.3.8">
    <property type="organism ID" value="518"/>
</dbReference>
<dbReference type="GO" id="GO:0009277">
    <property type="term" value="C:fungal-type cell wall"/>
    <property type="evidence" value="ECO:0007669"/>
    <property type="project" value="TreeGrafter"/>
</dbReference>
<dbReference type="GO" id="GO:0016158">
    <property type="term" value="F:3-phytase activity"/>
    <property type="evidence" value="ECO:0007669"/>
    <property type="project" value="UniProtKB-EC"/>
</dbReference>
<dbReference type="GO" id="GO:0003993">
    <property type="term" value="F:acid phosphatase activity"/>
    <property type="evidence" value="ECO:0007669"/>
    <property type="project" value="TreeGrafter"/>
</dbReference>
<dbReference type="CDD" id="cd07061">
    <property type="entry name" value="HP_HAP_like"/>
    <property type="match status" value="1"/>
</dbReference>
<dbReference type="FunFam" id="3.40.50.1240:FF:000042">
    <property type="entry name" value="Acid phosphatase aph, 3-phytase phyB"/>
    <property type="match status" value="1"/>
</dbReference>
<dbReference type="Gene3D" id="3.40.50.1240">
    <property type="entry name" value="Phosphoglycerate mutase-like"/>
    <property type="match status" value="3"/>
</dbReference>
<dbReference type="InterPro" id="IPR033379">
    <property type="entry name" value="Acid_Pase_AS"/>
</dbReference>
<dbReference type="InterPro" id="IPR000560">
    <property type="entry name" value="His_Pase_clade-2"/>
</dbReference>
<dbReference type="InterPro" id="IPR029033">
    <property type="entry name" value="His_PPase_superfam"/>
</dbReference>
<dbReference type="InterPro" id="IPR016274">
    <property type="entry name" value="Histidine_acid_Pase_euk"/>
</dbReference>
<dbReference type="PANTHER" id="PTHR20963:SF18">
    <property type="entry name" value="ACID PHOSPHATASE PHO11-RELATED"/>
    <property type="match status" value="1"/>
</dbReference>
<dbReference type="PANTHER" id="PTHR20963">
    <property type="entry name" value="MULTIPLE INOSITOL POLYPHOSPHATE PHOSPHATASE-RELATED"/>
    <property type="match status" value="1"/>
</dbReference>
<dbReference type="Pfam" id="PF00328">
    <property type="entry name" value="His_Phos_2"/>
    <property type="match status" value="1"/>
</dbReference>
<dbReference type="PIRSF" id="PIRSF000894">
    <property type="entry name" value="Acid_phosphatase"/>
    <property type="match status" value="1"/>
</dbReference>
<dbReference type="SUPFAM" id="SSF53254">
    <property type="entry name" value="Phosphoglycerate mutase-like"/>
    <property type="match status" value="1"/>
</dbReference>
<dbReference type="PROSITE" id="PS00616">
    <property type="entry name" value="HIS_ACID_PHOSPHAT_1"/>
    <property type="match status" value="1"/>
</dbReference>
<dbReference type="PROSITE" id="PS00778">
    <property type="entry name" value="HIS_ACID_PHOSPHAT_2"/>
    <property type="match status" value="1"/>
</dbReference>
<gene>
    <name type="primary">phyB</name>
</gene>